<sequence length="217" mass="24018">MGQKVHPIGMRVGVIRDWDAKWYAEKEYADYLHEDLAIRQLIQTKLADASVSLIETERAINKVIVTLHTAKPGMVIGKSGANVDALRAELNKLTGKQVHINIVEIKKPDLDAHLVGEGIAKQLEARIAFRRAQKQAIQRAMRAGAKGIKTQVSGRLNGADIARAEGYSEGTVPLHTLRADIDYAWEEADTTYGKLGVKVWIYRGEVLPTKKSVKGEK</sequence>
<name>RS3_LACLS</name>
<protein>
    <recommendedName>
        <fullName evidence="1">Small ribosomal subunit protein uS3</fullName>
    </recommendedName>
    <alternativeName>
        <fullName evidence="2">30S ribosomal protein S3</fullName>
    </alternativeName>
</protein>
<reference key="1">
    <citation type="journal article" date="2006" name="Proc. Natl. Acad. Sci. U.S.A.">
        <title>Comparative genomics of the lactic acid bacteria.</title>
        <authorList>
            <person name="Makarova K.S."/>
            <person name="Slesarev A."/>
            <person name="Wolf Y.I."/>
            <person name="Sorokin A."/>
            <person name="Mirkin B."/>
            <person name="Koonin E.V."/>
            <person name="Pavlov A."/>
            <person name="Pavlova N."/>
            <person name="Karamychev V."/>
            <person name="Polouchine N."/>
            <person name="Shakhova V."/>
            <person name="Grigoriev I."/>
            <person name="Lou Y."/>
            <person name="Rohksar D."/>
            <person name="Lucas S."/>
            <person name="Huang K."/>
            <person name="Goodstein D.M."/>
            <person name="Hawkins T."/>
            <person name="Plengvidhya V."/>
            <person name="Welker D."/>
            <person name="Hughes J."/>
            <person name="Goh Y."/>
            <person name="Benson A."/>
            <person name="Baldwin K."/>
            <person name="Lee J.-H."/>
            <person name="Diaz-Muniz I."/>
            <person name="Dosti B."/>
            <person name="Smeianov V."/>
            <person name="Wechter W."/>
            <person name="Barabote R."/>
            <person name="Lorca G."/>
            <person name="Altermann E."/>
            <person name="Barrangou R."/>
            <person name="Ganesan B."/>
            <person name="Xie Y."/>
            <person name="Rawsthorne H."/>
            <person name="Tamir D."/>
            <person name="Parker C."/>
            <person name="Breidt F."/>
            <person name="Broadbent J.R."/>
            <person name="Hutkins R."/>
            <person name="O'Sullivan D."/>
            <person name="Steele J."/>
            <person name="Unlu G."/>
            <person name="Saier M.H. Jr."/>
            <person name="Klaenhammer T."/>
            <person name="Richardson P."/>
            <person name="Kozyavkin S."/>
            <person name="Weimer B.C."/>
            <person name="Mills D.A."/>
        </authorList>
    </citation>
    <scope>NUCLEOTIDE SEQUENCE [LARGE SCALE GENOMIC DNA]</scope>
    <source>
        <strain>SK11</strain>
    </source>
</reference>
<gene>
    <name evidence="1" type="primary">rpsC</name>
    <name type="ordered locus">LACR_2396</name>
</gene>
<feature type="chain" id="PRO_0000293813" description="Small ribosomal subunit protein uS3">
    <location>
        <begin position="1"/>
        <end position="217"/>
    </location>
</feature>
<feature type="domain" description="KH type-2" evidence="1">
    <location>
        <begin position="38"/>
        <end position="106"/>
    </location>
</feature>
<evidence type="ECO:0000255" key="1">
    <source>
        <dbReference type="HAMAP-Rule" id="MF_01309"/>
    </source>
</evidence>
<evidence type="ECO:0000305" key="2"/>
<dbReference type="EMBL" id="CP000425">
    <property type="protein sequence ID" value="ABJ73842.1"/>
    <property type="molecule type" value="Genomic_DNA"/>
</dbReference>
<dbReference type="RefSeq" id="WP_003129960.1">
    <property type="nucleotide sequence ID" value="NC_008527.1"/>
</dbReference>
<dbReference type="SMR" id="Q02W30"/>
<dbReference type="GeneID" id="89634440"/>
<dbReference type="KEGG" id="llc:LACR_2396"/>
<dbReference type="HOGENOM" id="CLU_058591_0_2_9"/>
<dbReference type="Proteomes" id="UP000000240">
    <property type="component" value="Chromosome"/>
</dbReference>
<dbReference type="GO" id="GO:0022627">
    <property type="term" value="C:cytosolic small ribosomal subunit"/>
    <property type="evidence" value="ECO:0007669"/>
    <property type="project" value="TreeGrafter"/>
</dbReference>
<dbReference type="GO" id="GO:0003729">
    <property type="term" value="F:mRNA binding"/>
    <property type="evidence" value="ECO:0007669"/>
    <property type="project" value="UniProtKB-UniRule"/>
</dbReference>
<dbReference type="GO" id="GO:0019843">
    <property type="term" value="F:rRNA binding"/>
    <property type="evidence" value="ECO:0007669"/>
    <property type="project" value="UniProtKB-UniRule"/>
</dbReference>
<dbReference type="GO" id="GO:0003735">
    <property type="term" value="F:structural constituent of ribosome"/>
    <property type="evidence" value="ECO:0007669"/>
    <property type="project" value="InterPro"/>
</dbReference>
<dbReference type="GO" id="GO:0006412">
    <property type="term" value="P:translation"/>
    <property type="evidence" value="ECO:0007669"/>
    <property type="project" value="UniProtKB-UniRule"/>
</dbReference>
<dbReference type="CDD" id="cd02412">
    <property type="entry name" value="KH-II_30S_S3"/>
    <property type="match status" value="1"/>
</dbReference>
<dbReference type="FunFam" id="3.30.1140.32:FF:000001">
    <property type="entry name" value="30S ribosomal protein S3"/>
    <property type="match status" value="1"/>
</dbReference>
<dbReference type="FunFam" id="3.30.300.20:FF:000001">
    <property type="entry name" value="30S ribosomal protein S3"/>
    <property type="match status" value="1"/>
</dbReference>
<dbReference type="Gene3D" id="3.30.300.20">
    <property type="match status" value="1"/>
</dbReference>
<dbReference type="Gene3D" id="3.30.1140.32">
    <property type="entry name" value="Ribosomal protein S3, C-terminal domain"/>
    <property type="match status" value="1"/>
</dbReference>
<dbReference type="HAMAP" id="MF_01309_B">
    <property type="entry name" value="Ribosomal_uS3_B"/>
    <property type="match status" value="1"/>
</dbReference>
<dbReference type="InterPro" id="IPR004087">
    <property type="entry name" value="KH_dom"/>
</dbReference>
<dbReference type="InterPro" id="IPR015946">
    <property type="entry name" value="KH_dom-like_a/b"/>
</dbReference>
<dbReference type="InterPro" id="IPR004044">
    <property type="entry name" value="KH_dom_type_2"/>
</dbReference>
<dbReference type="InterPro" id="IPR009019">
    <property type="entry name" value="KH_sf_prok-type"/>
</dbReference>
<dbReference type="InterPro" id="IPR036419">
    <property type="entry name" value="Ribosomal_S3_C_sf"/>
</dbReference>
<dbReference type="InterPro" id="IPR005704">
    <property type="entry name" value="Ribosomal_uS3_bac-typ"/>
</dbReference>
<dbReference type="InterPro" id="IPR001351">
    <property type="entry name" value="Ribosomal_uS3_C"/>
</dbReference>
<dbReference type="InterPro" id="IPR018280">
    <property type="entry name" value="Ribosomal_uS3_CS"/>
</dbReference>
<dbReference type="NCBIfam" id="TIGR01009">
    <property type="entry name" value="rpsC_bact"/>
    <property type="match status" value="1"/>
</dbReference>
<dbReference type="PANTHER" id="PTHR11760">
    <property type="entry name" value="30S/40S RIBOSOMAL PROTEIN S3"/>
    <property type="match status" value="1"/>
</dbReference>
<dbReference type="PANTHER" id="PTHR11760:SF19">
    <property type="entry name" value="SMALL RIBOSOMAL SUBUNIT PROTEIN US3C"/>
    <property type="match status" value="1"/>
</dbReference>
<dbReference type="Pfam" id="PF07650">
    <property type="entry name" value="KH_2"/>
    <property type="match status" value="1"/>
</dbReference>
<dbReference type="Pfam" id="PF00189">
    <property type="entry name" value="Ribosomal_S3_C"/>
    <property type="match status" value="1"/>
</dbReference>
<dbReference type="SMART" id="SM00322">
    <property type="entry name" value="KH"/>
    <property type="match status" value="1"/>
</dbReference>
<dbReference type="SUPFAM" id="SSF54814">
    <property type="entry name" value="Prokaryotic type KH domain (KH-domain type II)"/>
    <property type="match status" value="1"/>
</dbReference>
<dbReference type="SUPFAM" id="SSF54821">
    <property type="entry name" value="Ribosomal protein S3 C-terminal domain"/>
    <property type="match status" value="1"/>
</dbReference>
<dbReference type="PROSITE" id="PS50823">
    <property type="entry name" value="KH_TYPE_2"/>
    <property type="match status" value="1"/>
</dbReference>
<dbReference type="PROSITE" id="PS00548">
    <property type="entry name" value="RIBOSOMAL_S3"/>
    <property type="match status" value="1"/>
</dbReference>
<proteinExistence type="inferred from homology"/>
<organism>
    <name type="scientific">Lactococcus lactis subsp. cremoris (strain SK11)</name>
    <dbReference type="NCBI Taxonomy" id="272622"/>
    <lineage>
        <taxon>Bacteria</taxon>
        <taxon>Bacillati</taxon>
        <taxon>Bacillota</taxon>
        <taxon>Bacilli</taxon>
        <taxon>Lactobacillales</taxon>
        <taxon>Streptococcaceae</taxon>
        <taxon>Lactococcus</taxon>
        <taxon>Lactococcus cremoris subsp. cremoris</taxon>
    </lineage>
</organism>
<comment type="function">
    <text evidence="1">Binds the lower part of the 30S subunit head. Binds mRNA in the 70S ribosome, positioning it for translation.</text>
</comment>
<comment type="subunit">
    <text evidence="1">Part of the 30S ribosomal subunit. Forms a tight complex with proteins S10 and S14.</text>
</comment>
<comment type="similarity">
    <text evidence="1">Belongs to the universal ribosomal protein uS3 family.</text>
</comment>
<accession>Q02W30</accession>
<keyword id="KW-0687">Ribonucleoprotein</keyword>
<keyword id="KW-0689">Ribosomal protein</keyword>
<keyword id="KW-0694">RNA-binding</keyword>
<keyword id="KW-0699">rRNA-binding</keyword>